<keyword id="KW-0965">Cell junction</keyword>
<keyword id="KW-1003">Cell membrane</keyword>
<keyword id="KW-0472">Membrane</keyword>
<keyword id="KW-0539">Nucleus</keyword>
<keyword id="KW-0597">Phosphoprotein</keyword>
<keyword id="KW-1185">Reference proteome</keyword>
<keyword id="KW-0677">Repeat</keyword>
<keyword id="KW-0728">SH3 domain</keyword>
<keyword id="KW-0796">Tight junction</keyword>
<proteinExistence type="evidence at protein level"/>
<comment type="function">
    <text evidence="1 2 9 10 12">Tjp1, Tjp2, and Tjp3 are closely related scaffolding proteins that link tight junction (TJ) transmembrane proteins such as claudins, junctional adhesion molecules, and occludin to the actin cytoskeleton (PubMed:17000770). The tight junction acts to limit movement of substances through the paracellular space and as a boundary between the compositionally distinct apical and basolateral plasma membrane domains of epithelial and endothelial cells. Binds and recruits PatJ to tight junctions where it connects and stabilizes apical and lateral components of tight junctions (By similarity). Promotes cell-cycle progression through the sequestration of cyclin D1 (Ccnd1) at tight junctions during mitosis which prevents Ccnd1 degradation during M-phase and enables S-phase transition (PubMed:21411630). With Tjp1 and Tjp2, participates in the junctional retention and stability of the transcription factor DbpA, but is not involved in its shuttling to the nucleus (By similarity). Contrary to Tjp2, Tjp3 is dispensable for individual viability, embryonic development, epithelial differentiation, and the establishment of TJs, at least in the laboratory environment (PubMed:17000770, PubMed:18172007).</text>
</comment>
<comment type="subunit">
    <text evidence="1 12">Interacts with occludin OCLN, claudins and TPJ1 (By similarity). Interacts with PATJ (By similarity). Interacts with UBN1 (By similarity). Interacts with FASLG (By similarity). Interacts with CCND1 (PubMed:21411630).</text>
</comment>
<comment type="subcellular location">
    <subcellularLocation>
        <location evidence="12">Cell membrane</location>
        <topology evidence="12">Peripheral membrane protein</topology>
        <orientation evidence="12">Cytoplasmic side</orientation>
    </subcellularLocation>
    <subcellularLocation>
        <location evidence="7 8 11 12">Cell junction</location>
        <location evidence="7 8 11 12">Tight junction</location>
    </subcellularLocation>
    <subcellularLocation>
        <location evidence="2">Nucleus</location>
    </subcellularLocation>
    <text evidence="2 12">Exhibits predominant nuclear expression in proliferating cells but is exclusively junctionally expressed after confluence is reached (By similarity). Shows an epithelial-specific tight junction localization in a Tjp1/Tjp2-dependent fashion (PubMed:21411630).</text>
</comment>
<comment type="tissue specificity">
    <text evidence="8">Is concentrated in various types of epithelium, in tissues such as the lung, liver and kidney, but not in endothelium or at cadherin-based cell-cell adhesion sites (PubMed:14622136).</text>
</comment>
<comment type="PTM">
    <text evidence="1">Phosphorylated (By similarity).</text>
</comment>
<comment type="similarity">
    <text evidence="13">Belongs to the MAGUK family.</text>
</comment>
<reference key="1">
    <citation type="journal article" date="1999" name="J. Cell Biol.">
        <title>Direct binding of three tight junction-associated MAGUKs, ZO-1, ZO-2, and ZO-3, with the COOH termini of claudins.</title>
        <authorList>
            <person name="Itoh M."/>
            <person name="Furuse M."/>
            <person name="Morita K."/>
            <person name="Kubota K."/>
            <person name="Saitou M."/>
            <person name="Tsukita S."/>
        </authorList>
    </citation>
    <scope>NUCLEOTIDE SEQUENCE [MRNA]</scope>
    <scope>INTERACTION WITH CLAUDINS</scope>
    <scope>SUBCELLULAR LOCATION</scope>
    <source>
        <strain>BALB/cJ</strain>
    </source>
</reference>
<reference key="2">
    <citation type="journal article" date="2003" name="Genes Cells">
        <title>Expression and distribution of ZO-3, a tight junction MAGUK protein, in mouse tissues.</title>
        <authorList>
            <person name="Inoko A."/>
            <person name="Itoh M."/>
            <person name="Tamura A."/>
            <person name="Matsuda M."/>
            <person name="Furuse M."/>
            <person name="Tsukita S."/>
        </authorList>
    </citation>
    <scope>SUBCELLULAR LOCATION</scope>
    <scope>TISSUE SPECIFICITY</scope>
</reference>
<reference key="3">
    <citation type="journal article" date="2006" name="Mol. Cell. Biol.">
        <title>Normal establishment of epithelial tight junctions in mice and cultured cells lacking expression of ZO-3, a tight-junction MAGUK protein.</title>
        <authorList>
            <person name="Adachi M."/>
            <person name="Inoko A."/>
            <person name="Hata M."/>
            <person name="Furuse K."/>
            <person name="Umeda K."/>
            <person name="Itoh M."/>
            <person name="Tsukita S."/>
        </authorList>
    </citation>
    <scope>FUNCTION</scope>
</reference>
<reference key="4">
    <citation type="journal article" date="2007" name="Proc. Natl. Acad. Sci. U.S.A.">
        <title>Large-scale phosphorylation analysis of mouse liver.</title>
        <authorList>
            <person name="Villen J."/>
            <person name="Beausoleil S.A."/>
            <person name="Gerber S.A."/>
            <person name="Gygi S.P."/>
        </authorList>
    </citation>
    <scope>PHOSPHORYLATION [LARGE SCALE ANALYSIS] AT SER-156; SER-157; SER-161; SER-343; SER-891 AND SER-892</scope>
    <scope>IDENTIFICATION BY MASS SPECTROMETRY [LARGE SCALE ANALYSIS]</scope>
    <source>
        <tissue>Liver</tissue>
    </source>
</reference>
<reference key="5">
    <citation type="journal article" date="2008" name="Mol. Cell. Biol.">
        <title>Early embryonic lethality of mice lacking ZO-2, but not ZO-3, reveals critical and nonredundant roles for individual zonula occludens proteins in mammalian development.</title>
        <authorList>
            <person name="Xu J."/>
            <person name="Kausalya P.J."/>
            <person name="Phua D.C."/>
            <person name="Ali S.M."/>
            <person name="Hossain Z."/>
            <person name="Hunziker W."/>
        </authorList>
    </citation>
    <scope>FUNCTION</scope>
</reference>
<reference key="6">
    <citation type="journal article" date="2009" name="Ann. N. Y. Acad. Sci.">
        <title>Roles of ZO-1 and ZO-2 in establishment of the belt-like adherens and tight junctions with paracellular permselective barrier function.</title>
        <authorList>
            <person name="Tsukita S."/>
            <person name="Katsuno T."/>
            <person name="Yamazaki Y."/>
            <person name="Umeda K."/>
            <person name="Tamura A."/>
            <person name="Tsukita S."/>
        </authorList>
    </citation>
    <scope>SUBCELLULAR LOCATION</scope>
</reference>
<reference key="7">
    <citation type="journal article" date="2010" name="Cell">
        <title>A tissue-specific atlas of mouse protein phosphorylation and expression.</title>
        <authorList>
            <person name="Huttlin E.L."/>
            <person name="Jedrychowski M.P."/>
            <person name="Elias J.E."/>
            <person name="Goswami T."/>
            <person name="Rad R."/>
            <person name="Beausoleil S.A."/>
            <person name="Villen J."/>
            <person name="Haas W."/>
            <person name="Sowa M.E."/>
            <person name="Gygi S.P."/>
        </authorList>
    </citation>
    <scope>PHOSPHORYLATION [LARGE SCALE ANALYSIS] AT SER-156; SER-157; SER-161; SER-311; SER-343; SER-891 AND SER-892</scope>
    <scope>IDENTIFICATION BY MASS SPECTROMETRY [LARGE SCALE ANALYSIS]</scope>
    <source>
        <tissue>Kidney</tissue>
        <tissue>Liver</tissue>
        <tissue>Lung</tissue>
        <tissue>Pancreas</tissue>
        <tissue>Spleen</tissue>
        <tissue>Testis</tissue>
    </source>
</reference>
<reference key="8">
    <citation type="journal article" date="2011" name="Mol. Biol. Cell">
        <title>Tight function zonula occludens-3 regulates cyclin D1-dependent cell proliferation.</title>
        <authorList>
            <person name="Capaldo C.T."/>
            <person name="Koch S."/>
            <person name="Kwon M."/>
            <person name="Laur O."/>
            <person name="Parkos C.A."/>
            <person name="Nusrat A."/>
        </authorList>
    </citation>
    <scope>FUNCTION</scope>
    <scope>SUBCELLULAR LOCATION</scope>
    <scope>INTERACTION WITH CCND1</scope>
</reference>
<protein>
    <recommendedName>
        <fullName>Tight junction protein ZO-3</fullName>
    </recommendedName>
    <alternativeName>
        <fullName>Tight junction protein 3</fullName>
    </alternativeName>
    <alternativeName>
        <fullName>Zona occludens protein 3</fullName>
    </alternativeName>
    <alternativeName>
        <fullName>Zonula occludens protein 3</fullName>
    </alternativeName>
</protein>
<feature type="chain" id="PRO_0000094547" description="Tight junction protein ZO-3">
    <location>
        <begin position="1"/>
        <end position="905"/>
    </location>
</feature>
<feature type="domain" description="PDZ 1" evidence="4">
    <location>
        <begin position="11"/>
        <end position="93"/>
    </location>
</feature>
<feature type="domain" description="PDZ 2" evidence="4">
    <location>
        <begin position="187"/>
        <end position="264"/>
    </location>
</feature>
<feature type="domain" description="PDZ 3" evidence="4">
    <location>
        <begin position="368"/>
        <end position="434"/>
    </location>
</feature>
<feature type="domain" description="SH3" evidence="5">
    <location>
        <begin position="464"/>
        <end position="541"/>
    </location>
</feature>
<feature type="domain" description="Guanylate kinase-like" evidence="3">
    <location>
        <begin position="573"/>
        <end position="754"/>
    </location>
</feature>
<feature type="region of interest" description="Disordered" evidence="6">
    <location>
        <begin position="92"/>
        <end position="167"/>
    </location>
</feature>
<feature type="region of interest" description="Disordered" evidence="6">
    <location>
        <begin position="289"/>
        <end position="367"/>
    </location>
</feature>
<feature type="region of interest" description="Disordered" evidence="6">
    <location>
        <begin position="773"/>
        <end position="818"/>
    </location>
</feature>
<feature type="region of interest" description="Disordered" evidence="6">
    <location>
        <begin position="850"/>
        <end position="905"/>
    </location>
</feature>
<feature type="compositionally biased region" description="Low complexity" evidence="6">
    <location>
        <begin position="124"/>
        <end position="133"/>
    </location>
</feature>
<feature type="compositionally biased region" description="Basic residues" evidence="6">
    <location>
        <begin position="139"/>
        <end position="155"/>
    </location>
</feature>
<feature type="compositionally biased region" description="Basic and acidic residues" evidence="6">
    <location>
        <begin position="851"/>
        <end position="877"/>
    </location>
</feature>
<feature type="modified residue" description="Phosphoserine" evidence="2">
    <location>
        <position position="111"/>
    </location>
</feature>
<feature type="modified residue" description="Phosphoserine" evidence="2">
    <location>
        <position position="128"/>
    </location>
</feature>
<feature type="modified residue" description="Phosphoserine" evidence="14 15">
    <location>
        <position position="156"/>
    </location>
</feature>
<feature type="modified residue" description="Phosphoserine" evidence="14 15">
    <location>
        <position position="157"/>
    </location>
</feature>
<feature type="modified residue" description="Phosphoserine" evidence="14 15">
    <location>
        <position position="161"/>
    </location>
</feature>
<feature type="modified residue" description="Phosphoserine" evidence="2">
    <location>
        <position position="195"/>
    </location>
</feature>
<feature type="modified residue" description="Phosphoserine" evidence="15">
    <location>
        <position position="311"/>
    </location>
</feature>
<feature type="modified residue" description="Phosphothreonine" evidence="2">
    <location>
        <position position="317"/>
    </location>
</feature>
<feature type="modified residue" description="Phosphoserine" evidence="2">
    <location>
        <position position="319"/>
    </location>
</feature>
<feature type="modified residue" description="Phosphoserine" evidence="14 15">
    <location>
        <position position="343"/>
    </location>
</feature>
<feature type="modified residue" description="Phosphoserine" evidence="2">
    <location>
        <position position="359"/>
    </location>
</feature>
<feature type="modified residue" description="Phosphoserine" evidence="2">
    <location>
        <position position="584"/>
    </location>
</feature>
<feature type="modified residue" description="Phosphoserine" evidence="14 15">
    <location>
        <position position="891"/>
    </location>
</feature>
<feature type="modified residue" description="Phosphoserine" evidence="14 15">
    <location>
        <position position="892"/>
    </location>
</feature>
<evidence type="ECO:0000250" key="1">
    <source>
        <dbReference type="UniProtKB" id="O62683"/>
    </source>
</evidence>
<evidence type="ECO:0000250" key="2">
    <source>
        <dbReference type="UniProtKB" id="O95049"/>
    </source>
</evidence>
<evidence type="ECO:0000255" key="3">
    <source>
        <dbReference type="PROSITE-ProRule" id="PRU00100"/>
    </source>
</evidence>
<evidence type="ECO:0000255" key="4">
    <source>
        <dbReference type="PROSITE-ProRule" id="PRU00143"/>
    </source>
</evidence>
<evidence type="ECO:0000255" key="5">
    <source>
        <dbReference type="PROSITE-ProRule" id="PRU00192"/>
    </source>
</evidence>
<evidence type="ECO:0000256" key="6">
    <source>
        <dbReference type="SAM" id="MobiDB-lite"/>
    </source>
</evidence>
<evidence type="ECO:0000269" key="7">
    <source>
    </source>
</evidence>
<evidence type="ECO:0000269" key="8">
    <source>
    </source>
</evidence>
<evidence type="ECO:0000269" key="9">
    <source>
    </source>
</evidence>
<evidence type="ECO:0000269" key="10">
    <source>
    </source>
</evidence>
<evidence type="ECO:0000269" key="11">
    <source>
    </source>
</evidence>
<evidence type="ECO:0000269" key="12">
    <source>
    </source>
</evidence>
<evidence type="ECO:0000305" key="13"/>
<evidence type="ECO:0007744" key="14">
    <source>
    </source>
</evidence>
<evidence type="ECO:0007744" key="15">
    <source>
    </source>
</evidence>
<sequence>MEELTIWEQHTATLYKDPRRGFGIAVSGGHDRASGSVVVSDVVPGSPAEGRLRTGDHIVMVNGVSVENVTSAFAIQILKTCTKTANVTVKRPRRVQLPATKASPASGHQLSDQEEADHGRGYEGDSSSGSGRSWGERSRRSRAGRRGRVGSHGRRSSGGGSEANGLDLVSGYKRLPKQDVLMRPLKSVLVKRRNSEEFGVKLGSQIFIKHITESGLAARNHGLQEGDLILQINGVSSANLSLSDTRRLIEKSEGELTLLVLRDSGQFLVNIPPAVSDSDSSLMEDISDLTSELSQAPPSHVPPPPLKGQRSPEDSQTDSPVETPQPRRRERSVNSRAIAEPESPGESRYDIYRVPSRQSLEDRGYSPDTRVVSFPKGASIGLRLAGGNDVGIFVSGVQAGSPADGQGIQEGDEILQVNGMPFRNLTREEAVQFLLGLPPGEDMELVTQSKTGHSLRRWSQSRVGDSFYIRTHFELEPSPPYGLGFTRGDVFHVVDTLYPGSGPGHGHSSHGGLWLAARMGRDLREQERGVIPNQSRAEQLASLEAAQRAAGVGPGASVGSNPRAEFWRLRSLRRGTKKASTQRSREDLSALTRQGHYPPYERVVLREASFKRPVVILGPVADIAMKKLTTEMPEEFEIAESMSRTDSPSKIIKLDTVRVIAERDKHALLDVTPSAIERLNYVQYYPIVIFCAPESRPALKALREWLAPASRRSSRRLYAQAQKLQKHSGHLFTATIPLHGTSDSWYQEVKAVIQQQQARPIWTAEDQLNSSSEDLDLTGHGLAASSGDLSCDSRTNSDYEDTDGEGAYTDREGGPQDVDEEVAPTALARSSEPVWVDDHQGLMGHGTTITDKWETQADSHYTQDQRRQDSMRTYKHEALRKKFTRARDVESSDDEGYDWGPATDL</sequence>
<name>ZO3_MOUSE</name>
<dbReference type="EMBL" id="AF157006">
    <property type="protein sequence ID" value="AAF24175.1"/>
    <property type="molecule type" value="mRNA"/>
</dbReference>
<dbReference type="SMR" id="Q9QXY1"/>
<dbReference type="FunCoup" id="Q9QXY1">
    <property type="interactions" value="118"/>
</dbReference>
<dbReference type="MINT" id="Q9QXY1"/>
<dbReference type="STRING" id="10090.ENSMUSP00000036438"/>
<dbReference type="iPTMnet" id="Q9QXY1"/>
<dbReference type="PhosphoSitePlus" id="Q9QXY1"/>
<dbReference type="jPOST" id="Q9QXY1"/>
<dbReference type="PaxDb" id="10090-ENSMUSP00000036438"/>
<dbReference type="ProteomicsDB" id="275313"/>
<dbReference type="AGR" id="MGI:1351650"/>
<dbReference type="MGI" id="MGI:1351650">
    <property type="gene designation" value="Tjp3"/>
</dbReference>
<dbReference type="eggNOG" id="KOG3580">
    <property type="taxonomic scope" value="Eukaryota"/>
</dbReference>
<dbReference type="InParanoid" id="Q9QXY1"/>
<dbReference type="PhylomeDB" id="Q9QXY1"/>
<dbReference type="ChiTaRS" id="Tjp3">
    <property type="organism name" value="mouse"/>
</dbReference>
<dbReference type="PRO" id="PR:Q9QXY1"/>
<dbReference type="Proteomes" id="UP000000589">
    <property type="component" value="Unplaced"/>
</dbReference>
<dbReference type="RNAct" id="Q9QXY1">
    <property type="molecule type" value="protein"/>
</dbReference>
<dbReference type="GO" id="GO:0016324">
    <property type="term" value="C:apical plasma membrane"/>
    <property type="evidence" value="ECO:0000314"/>
    <property type="project" value="MGI"/>
</dbReference>
<dbReference type="GO" id="GO:0005923">
    <property type="term" value="C:bicellular tight junction"/>
    <property type="evidence" value="ECO:0000314"/>
    <property type="project" value="MGI"/>
</dbReference>
<dbReference type="GO" id="GO:0009986">
    <property type="term" value="C:cell surface"/>
    <property type="evidence" value="ECO:0000266"/>
    <property type="project" value="MGI"/>
</dbReference>
<dbReference type="GO" id="GO:0005911">
    <property type="term" value="C:cell-cell junction"/>
    <property type="evidence" value="ECO:0000314"/>
    <property type="project" value="ARUK-UCL"/>
</dbReference>
<dbReference type="GO" id="GO:0005829">
    <property type="term" value="C:cytosol"/>
    <property type="evidence" value="ECO:0000314"/>
    <property type="project" value="ARUK-UCL"/>
</dbReference>
<dbReference type="GO" id="GO:0005634">
    <property type="term" value="C:nucleus"/>
    <property type="evidence" value="ECO:0000314"/>
    <property type="project" value="ARUK-UCL"/>
</dbReference>
<dbReference type="GO" id="GO:2000045">
    <property type="term" value="P:regulation of G1/S transition of mitotic cell cycle"/>
    <property type="evidence" value="ECO:0000316"/>
    <property type="project" value="MGI"/>
</dbReference>
<dbReference type="CDD" id="cd06728">
    <property type="entry name" value="PDZ2_ZO1-like_ds"/>
    <property type="match status" value="1"/>
</dbReference>
<dbReference type="CDD" id="cd06729">
    <property type="entry name" value="PDZ3_ZO1-like_domain"/>
    <property type="match status" value="1"/>
</dbReference>
<dbReference type="FunFam" id="2.30.42.10:FF:000013">
    <property type="entry name" value="Putative tight junction protein ZO-1"/>
    <property type="match status" value="1"/>
</dbReference>
<dbReference type="FunFam" id="3.40.50.300:FF:000110">
    <property type="entry name" value="tight junction protein ZO-1 isoform X1"/>
    <property type="match status" value="1"/>
</dbReference>
<dbReference type="Gene3D" id="2.30.42.10">
    <property type="match status" value="3"/>
</dbReference>
<dbReference type="Gene3D" id="3.40.50.300">
    <property type="entry name" value="P-loop containing nucleotide triphosphate hydrolases"/>
    <property type="match status" value="1"/>
</dbReference>
<dbReference type="Gene3D" id="2.30.30.40">
    <property type="entry name" value="SH3 Domains"/>
    <property type="match status" value="1"/>
</dbReference>
<dbReference type="InterPro" id="IPR008145">
    <property type="entry name" value="GK/Ca_channel_bsu"/>
</dbReference>
<dbReference type="InterPro" id="IPR008144">
    <property type="entry name" value="Guanylate_kin-like_dom"/>
</dbReference>
<dbReference type="InterPro" id="IPR027417">
    <property type="entry name" value="P-loop_NTPase"/>
</dbReference>
<dbReference type="InterPro" id="IPR001478">
    <property type="entry name" value="PDZ"/>
</dbReference>
<dbReference type="InterPro" id="IPR036034">
    <property type="entry name" value="PDZ_sf"/>
</dbReference>
<dbReference type="InterPro" id="IPR036028">
    <property type="entry name" value="SH3-like_dom_sf"/>
</dbReference>
<dbReference type="InterPro" id="IPR001452">
    <property type="entry name" value="SH3_domain"/>
</dbReference>
<dbReference type="InterPro" id="IPR005417">
    <property type="entry name" value="ZO"/>
</dbReference>
<dbReference type="InterPro" id="IPR005420">
    <property type="entry name" value="ZO-3"/>
</dbReference>
<dbReference type="PANTHER" id="PTHR13865">
    <property type="entry name" value="TIGHT JUNCTION PROTEIN"/>
    <property type="match status" value="1"/>
</dbReference>
<dbReference type="PANTHER" id="PTHR13865:SF11">
    <property type="entry name" value="TIGHT JUNCTION PROTEIN ZO-3"/>
    <property type="match status" value="1"/>
</dbReference>
<dbReference type="Pfam" id="PF00625">
    <property type="entry name" value="Guanylate_kin"/>
    <property type="match status" value="1"/>
</dbReference>
<dbReference type="Pfam" id="PF00595">
    <property type="entry name" value="PDZ"/>
    <property type="match status" value="3"/>
</dbReference>
<dbReference type="Pfam" id="PF07653">
    <property type="entry name" value="SH3_2"/>
    <property type="match status" value="1"/>
</dbReference>
<dbReference type="PRINTS" id="PR01597">
    <property type="entry name" value="ZONOCCLUDNS"/>
</dbReference>
<dbReference type="PRINTS" id="PR01600">
    <property type="entry name" value="ZONOCCLUDNS3"/>
</dbReference>
<dbReference type="SMART" id="SM00072">
    <property type="entry name" value="GuKc"/>
    <property type="match status" value="1"/>
</dbReference>
<dbReference type="SMART" id="SM00228">
    <property type="entry name" value="PDZ"/>
    <property type="match status" value="3"/>
</dbReference>
<dbReference type="SUPFAM" id="SSF52540">
    <property type="entry name" value="P-loop containing nucleoside triphosphate hydrolases"/>
    <property type="match status" value="1"/>
</dbReference>
<dbReference type="SUPFAM" id="SSF50156">
    <property type="entry name" value="PDZ domain-like"/>
    <property type="match status" value="3"/>
</dbReference>
<dbReference type="SUPFAM" id="SSF50044">
    <property type="entry name" value="SH3-domain"/>
    <property type="match status" value="1"/>
</dbReference>
<dbReference type="PROSITE" id="PS50052">
    <property type="entry name" value="GUANYLATE_KINASE_2"/>
    <property type="match status" value="1"/>
</dbReference>
<dbReference type="PROSITE" id="PS50106">
    <property type="entry name" value="PDZ"/>
    <property type="match status" value="3"/>
</dbReference>
<dbReference type="PROSITE" id="PS50002">
    <property type="entry name" value="SH3"/>
    <property type="match status" value="1"/>
</dbReference>
<accession>Q9QXY1</accession>
<organism>
    <name type="scientific">Mus musculus</name>
    <name type="common">Mouse</name>
    <dbReference type="NCBI Taxonomy" id="10090"/>
    <lineage>
        <taxon>Eukaryota</taxon>
        <taxon>Metazoa</taxon>
        <taxon>Chordata</taxon>
        <taxon>Craniata</taxon>
        <taxon>Vertebrata</taxon>
        <taxon>Euteleostomi</taxon>
        <taxon>Mammalia</taxon>
        <taxon>Eutheria</taxon>
        <taxon>Euarchontoglires</taxon>
        <taxon>Glires</taxon>
        <taxon>Rodentia</taxon>
        <taxon>Myomorpha</taxon>
        <taxon>Muroidea</taxon>
        <taxon>Muridae</taxon>
        <taxon>Murinae</taxon>
        <taxon>Mus</taxon>
        <taxon>Mus</taxon>
    </lineage>
</organism>
<gene>
    <name type="primary">Tjp3</name>
    <name type="synonym">Zo3</name>
</gene>